<proteinExistence type="evidence at transcript level"/>
<evidence type="ECO:0000250" key="1">
    <source>
        <dbReference type="UniProtKB" id="P00327"/>
    </source>
</evidence>
<evidence type="ECO:0000250" key="2">
    <source>
        <dbReference type="UniProtKB" id="P06525"/>
    </source>
</evidence>
<evidence type="ECO:0000305" key="3"/>
<protein>
    <recommendedName>
        <fullName>Alcohol dehydrogenase-like 6</fullName>
        <ecNumber evidence="2">1.1.1.1</ecNumber>
    </recommendedName>
</protein>
<feature type="chain" id="PRO_0000299188" description="Alcohol dehydrogenase-like 6">
    <location>
        <begin position="1"/>
        <end position="381"/>
    </location>
</feature>
<feature type="binding site" evidence="2">
    <location>
        <position position="53"/>
    </location>
    <ligand>
        <name>Zn(2+)</name>
        <dbReference type="ChEBI" id="CHEBI:29105"/>
        <label>1</label>
        <note>catalytic</note>
    </ligand>
</feature>
<feature type="binding site" evidence="2">
    <location>
        <position position="55"/>
    </location>
    <ligand>
        <name>an alcohol</name>
        <dbReference type="ChEBI" id="CHEBI:30879"/>
    </ligand>
</feature>
<feature type="binding site" evidence="2">
    <location>
        <position position="55"/>
    </location>
    <ligand>
        <name>NAD(+)</name>
        <dbReference type="ChEBI" id="CHEBI:57540"/>
    </ligand>
</feature>
<feature type="binding site" evidence="2">
    <location>
        <position position="55"/>
    </location>
    <ligand>
        <name>Zn(2+)</name>
        <dbReference type="ChEBI" id="CHEBI:29105"/>
        <label>1</label>
        <note>catalytic</note>
    </ligand>
</feature>
<feature type="binding site" evidence="1">
    <location>
        <position position="72"/>
    </location>
    <ligand>
        <name>an alcohol</name>
        <dbReference type="ChEBI" id="CHEBI:30879"/>
    </ligand>
</feature>
<feature type="binding site" evidence="2">
    <location>
        <position position="72"/>
    </location>
    <ligand>
        <name>Zn(2+)</name>
        <dbReference type="ChEBI" id="CHEBI:29105"/>
        <label>1</label>
        <note>catalytic</note>
    </ligand>
</feature>
<feature type="binding site" evidence="2">
    <location>
        <position position="102"/>
    </location>
    <ligand>
        <name>Zn(2+)</name>
        <dbReference type="ChEBI" id="CHEBI:29105"/>
        <label>2</label>
    </ligand>
</feature>
<feature type="binding site" evidence="2">
    <location>
        <position position="105"/>
    </location>
    <ligand>
        <name>Zn(2+)</name>
        <dbReference type="ChEBI" id="CHEBI:29105"/>
        <label>2</label>
    </ligand>
</feature>
<feature type="binding site" evidence="2">
    <location>
        <position position="108"/>
    </location>
    <ligand>
        <name>Zn(2+)</name>
        <dbReference type="ChEBI" id="CHEBI:29105"/>
        <label>2</label>
    </ligand>
</feature>
<feature type="binding site" evidence="2">
    <location>
        <position position="116"/>
    </location>
    <ligand>
        <name>Zn(2+)</name>
        <dbReference type="ChEBI" id="CHEBI:29105"/>
        <label>2</label>
    </ligand>
</feature>
<feature type="binding site" evidence="2">
    <location>
        <position position="179"/>
    </location>
    <ligand>
        <name>Zn(2+)</name>
        <dbReference type="ChEBI" id="CHEBI:29105"/>
        <label>1</label>
        <note>catalytic</note>
    </ligand>
</feature>
<feature type="binding site" evidence="2">
    <location>
        <begin position="204"/>
        <end position="209"/>
    </location>
    <ligand>
        <name>NAD(+)</name>
        <dbReference type="ChEBI" id="CHEBI:57540"/>
    </ligand>
</feature>
<feature type="binding site" evidence="2">
    <location>
        <position position="228"/>
    </location>
    <ligand>
        <name>NAD(+)</name>
        <dbReference type="ChEBI" id="CHEBI:57540"/>
    </ligand>
</feature>
<feature type="binding site" evidence="2">
    <location>
        <position position="233"/>
    </location>
    <ligand>
        <name>NAD(+)</name>
        <dbReference type="ChEBI" id="CHEBI:57540"/>
    </ligand>
</feature>
<feature type="binding site" evidence="1">
    <location>
        <begin position="297"/>
        <end position="299"/>
    </location>
    <ligand>
        <name>NAD(+)</name>
        <dbReference type="ChEBI" id="CHEBI:57540"/>
    </ligand>
</feature>
<feature type="binding site" evidence="2">
    <location>
        <position position="324"/>
    </location>
    <ligand>
        <name>NAD(+)</name>
        <dbReference type="ChEBI" id="CHEBI:57540"/>
    </ligand>
</feature>
<feature type="binding site" evidence="2">
    <location>
        <position position="374"/>
    </location>
    <ligand>
        <name>NAD(+)</name>
        <dbReference type="ChEBI" id="CHEBI:57540"/>
    </ligand>
</feature>
<feature type="splice variant" id="VSP_027586" description="In isoform 2." evidence="3">
    <location>
        <begin position="1"/>
        <end position="29"/>
    </location>
</feature>
<feature type="sequence conflict" description="In Ref. 4; AAM62747." evidence="3" ref="4">
    <original>G</original>
    <variation>C</variation>
    <location>
        <position position="125"/>
    </location>
</feature>
<feature type="sequence conflict" description="In Ref. 4; AAM62747." evidence="3" ref="4">
    <original>R</original>
    <variation>S</variation>
    <location>
        <position position="219"/>
    </location>
</feature>
<dbReference type="EC" id="1.1.1.1" evidence="2"/>
<dbReference type="EMBL" id="AL392145">
    <property type="protein sequence ID" value="CAC08250.1"/>
    <property type="status" value="ALT_SEQ"/>
    <property type="molecule type" value="Genomic_DNA"/>
</dbReference>
<dbReference type="EMBL" id="CP002688">
    <property type="protein sequence ID" value="AED93355.1"/>
    <property type="molecule type" value="Genomic_DNA"/>
</dbReference>
<dbReference type="EMBL" id="CP002688">
    <property type="protein sequence ID" value="AED93356.1"/>
    <property type="molecule type" value="Genomic_DNA"/>
</dbReference>
<dbReference type="EMBL" id="CP002688">
    <property type="protein sequence ID" value="AED93357.1"/>
    <property type="molecule type" value="Genomic_DNA"/>
</dbReference>
<dbReference type="EMBL" id="AY079163">
    <property type="protein sequence ID" value="AAL85002.1"/>
    <property type="molecule type" value="mRNA"/>
</dbReference>
<dbReference type="EMBL" id="AY094000">
    <property type="protein sequence ID" value="AAM16261.1"/>
    <property type="molecule type" value="mRNA"/>
</dbReference>
<dbReference type="EMBL" id="AY085523">
    <property type="protein sequence ID" value="AAM62747.1"/>
    <property type="molecule type" value="mRNA"/>
</dbReference>
<dbReference type="RefSeq" id="NP_001078619.1">
    <molecule id="Q8LEB2-2"/>
    <property type="nucleotide sequence ID" value="NM_001085150.1"/>
</dbReference>
<dbReference type="RefSeq" id="NP_568453.1">
    <molecule id="Q8LEB2-1"/>
    <property type="nucleotide sequence ID" value="NM_122385.5"/>
</dbReference>
<dbReference type="RefSeq" id="NP_974831.1">
    <molecule id="Q8LEB2-2"/>
    <property type="nucleotide sequence ID" value="NM_203102.2"/>
</dbReference>
<dbReference type="SMR" id="Q8LEB2"/>
<dbReference type="FunCoup" id="Q8LEB2">
    <property type="interactions" value="174"/>
</dbReference>
<dbReference type="STRING" id="3702.Q8LEB2"/>
<dbReference type="iPTMnet" id="Q8LEB2"/>
<dbReference type="PaxDb" id="3702-AT5G24760.1"/>
<dbReference type="ProteomicsDB" id="244647">
    <molecule id="Q8LEB2-1"/>
</dbReference>
<dbReference type="EnsemblPlants" id="AT5G24760.1">
    <molecule id="Q8LEB2-1"/>
    <property type="protein sequence ID" value="AT5G24760.1"/>
    <property type="gene ID" value="AT5G24760"/>
</dbReference>
<dbReference type="EnsemblPlants" id="AT5G24760.2">
    <molecule id="Q8LEB2-2"/>
    <property type="protein sequence ID" value="AT5G24760.2"/>
    <property type="gene ID" value="AT5G24760"/>
</dbReference>
<dbReference type="EnsemblPlants" id="AT5G24760.3">
    <molecule id="Q8LEB2-2"/>
    <property type="protein sequence ID" value="AT5G24760.3"/>
    <property type="gene ID" value="AT5G24760"/>
</dbReference>
<dbReference type="GeneID" id="832545"/>
<dbReference type="Gramene" id="AT5G24760.1">
    <molecule id="Q8LEB2-1"/>
    <property type="protein sequence ID" value="AT5G24760.1"/>
    <property type="gene ID" value="AT5G24760"/>
</dbReference>
<dbReference type="Gramene" id="AT5G24760.2">
    <molecule id="Q8LEB2-2"/>
    <property type="protein sequence ID" value="AT5G24760.2"/>
    <property type="gene ID" value="AT5G24760"/>
</dbReference>
<dbReference type="Gramene" id="AT5G24760.3">
    <molecule id="Q8LEB2-2"/>
    <property type="protein sequence ID" value="AT5G24760.3"/>
    <property type="gene ID" value="AT5G24760"/>
</dbReference>
<dbReference type="KEGG" id="ath:AT5G24760"/>
<dbReference type="Araport" id="AT5G24760"/>
<dbReference type="TAIR" id="AT5G24760"/>
<dbReference type="eggNOG" id="KOG0022">
    <property type="taxonomic scope" value="Eukaryota"/>
</dbReference>
<dbReference type="HOGENOM" id="CLU_026673_14_0_1"/>
<dbReference type="InParanoid" id="Q8LEB2"/>
<dbReference type="OMA" id="QVNEGYQ"/>
<dbReference type="PhylomeDB" id="Q8LEB2"/>
<dbReference type="BioCyc" id="ARA:AT5G24760-MONOMER"/>
<dbReference type="PRO" id="PR:Q8LEB2"/>
<dbReference type="Proteomes" id="UP000006548">
    <property type="component" value="Chromosome 5"/>
</dbReference>
<dbReference type="ExpressionAtlas" id="Q8LEB2">
    <property type="expression patterns" value="baseline and differential"/>
</dbReference>
<dbReference type="GO" id="GO:0005737">
    <property type="term" value="C:cytoplasm"/>
    <property type="evidence" value="ECO:0007669"/>
    <property type="project" value="UniProtKB-SubCell"/>
</dbReference>
<dbReference type="GO" id="GO:0004022">
    <property type="term" value="F:alcohol dehydrogenase (NAD+) activity"/>
    <property type="evidence" value="ECO:0007669"/>
    <property type="project" value="UniProtKB-EC"/>
</dbReference>
<dbReference type="GO" id="GO:0008270">
    <property type="term" value="F:zinc ion binding"/>
    <property type="evidence" value="ECO:0007669"/>
    <property type="project" value="InterPro"/>
</dbReference>
<dbReference type="CDD" id="cd08301">
    <property type="entry name" value="alcohol_DH_plants"/>
    <property type="match status" value="1"/>
</dbReference>
<dbReference type="FunFam" id="3.90.180.10:FF:000007">
    <property type="entry name" value="Alcohol dehydrogenase 6"/>
    <property type="match status" value="1"/>
</dbReference>
<dbReference type="FunFam" id="3.40.50.720:FF:000003">
    <property type="entry name" value="S-(hydroxymethyl)glutathione dehydrogenase"/>
    <property type="match status" value="1"/>
</dbReference>
<dbReference type="Gene3D" id="3.90.180.10">
    <property type="entry name" value="Medium-chain alcohol dehydrogenases, catalytic domain"/>
    <property type="match status" value="1"/>
</dbReference>
<dbReference type="Gene3D" id="3.40.50.720">
    <property type="entry name" value="NAD(P)-binding Rossmann-like Domain"/>
    <property type="match status" value="1"/>
</dbReference>
<dbReference type="InterPro" id="IPR013149">
    <property type="entry name" value="ADH-like_C"/>
</dbReference>
<dbReference type="InterPro" id="IPR013154">
    <property type="entry name" value="ADH-like_N"/>
</dbReference>
<dbReference type="InterPro" id="IPR002328">
    <property type="entry name" value="ADH_Zn_CS"/>
</dbReference>
<dbReference type="InterPro" id="IPR011032">
    <property type="entry name" value="GroES-like_sf"/>
</dbReference>
<dbReference type="InterPro" id="IPR036291">
    <property type="entry name" value="NAD(P)-bd_dom_sf"/>
</dbReference>
<dbReference type="InterPro" id="IPR020843">
    <property type="entry name" value="PKS_ER"/>
</dbReference>
<dbReference type="PANTHER" id="PTHR43880">
    <property type="entry name" value="ALCOHOL DEHYDROGENASE"/>
    <property type="match status" value="1"/>
</dbReference>
<dbReference type="PANTHER" id="PTHR43880:SF5">
    <property type="entry name" value="ALCOHOL DEHYDROGENASE-LIKE 6"/>
    <property type="match status" value="1"/>
</dbReference>
<dbReference type="Pfam" id="PF08240">
    <property type="entry name" value="ADH_N"/>
    <property type="match status" value="1"/>
</dbReference>
<dbReference type="Pfam" id="PF00107">
    <property type="entry name" value="ADH_zinc_N"/>
    <property type="match status" value="1"/>
</dbReference>
<dbReference type="SMART" id="SM00829">
    <property type="entry name" value="PKS_ER"/>
    <property type="match status" value="1"/>
</dbReference>
<dbReference type="SUPFAM" id="SSF50129">
    <property type="entry name" value="GroES-like"/>
    <property type="match status" value="2"/>
</dbReference>
<dbReference type="SUPFAM" id="SSF51735">
    <property type="entry name" value="NAD(P)-binding Rossmann-fold domains"/>
    <property type="match status" value="1"/>
</dbReference>
<dbReference type="PROSITE" id="PS00059">
    <property type="entry name" value="ADH_ZINC"/>
    <property type="match status" value="1"/>
</dbReference>
<gene>
    <name type="ordered locus">At5g24760</name>
    <name type="ORF">T4C12_30</name>
</gene>
<name>ADHL6_ARATH</name>
<accession>Q8LEB2</accession>
<accession>Q3E967</accession>
<accession>Q8RV10</accession>
<accession>Q9FT42</accession>
<sequence>MSASSSSFEQPQVITCNAAVAWRAGEPLVMEEVEVSPPQPLEIRIKVVCTSLCRSDLSAWESQSLLPRIFGHEAAGIVESIGEGVTEFEKGDHVLAVFTGECGSCRHCISGKSNMCQVLGMERKGLMHSDQKTRFSIKGKPVYHYCAVSSFSEYTVVHSGCAVKVDPLAPLHKICLLSCGVAAGLGAAWNVADVQKGSSVVIFGLGTVGLSVAQGAKLRGAAQILGVDINPAKAEQAKTFGVTDFINSNDLSEPIPQVIKRMTGGGADFSFECVGDTGIATTALQSCSDGWGMTVTLGVPKAKPEVSAHYGLFLSGKSLKGTLFGGWKPKSDLPSLIDKYMNKEIMIDEFITHNLSFDEINKAFVLMREGKCLRCVLHMPK</sequence>
<keyword id="KW-0025">Alternative splicing</keyword>
<keyword id="KW-0963">Cytoplasm</keyword>
<keyword id="KW-0479">Metal-binding</keyword>
<keyword id="KW-0520">NAD</keyword>
<keyword id="KW-0560">Oxidoreductase</keyword>
<keyword id="KW-1185">Reference proteome</keyword>
<keyword id="KW-0862">Zinc</keyword>
<reference key="1">
    <citation type="journal article" date="2000" name="Nature">
        <title>Sequence and analysis of chromosome 5 of the plant Arabidopsis thaliana.</title>
        <authorList>
            <person name="Tabata S."/>
            <person name="Kaneko T."/>
            <person name="Nakamura Y."/>
            <person name="Kotani H."/>
            <person name="Kato T."/>
            <person name="Asamizu E."/>
            <person name="Miyajima N."/>
            <person name="Sasamoto S."/>
            <person name="Kimura T."/>
            <person name="Hosouchi T."/>
            <person name="Kawashima K."/>
            <person name="Kohara M."/>
            <person name="Matsumoto M."/>
            <person name="Matsuno A."/>
            <person name="Muraki A."/>
            <person name="Nakayama S."/>
            <person name="Nakazaki N."/>
            <person name="Naruo K."/>
            <person name="Okumura S."/>
            <person name="Shinpo S."/>
            <person name="Takeuchi C."/>
            <person name="Wada T."/>
            <person name="Watanabe A."/>
            <person name="Yamada M."/>
            <person name="Yasuda M."/>
            <person name="Sato S."/>
            <person name="de la Bastide M."/>
            <person name="Huang E."/>
            <person name="Spiegel L."/>
            <person name="Gnoj L."/>
            <person name="O'Shaughnessy A."/>
            <person name="Preston R."/>
            <person name="Habermann K."/>
            <person name="Murray J."/>
            <person name="Johnson D."/>
            <person name="Rohlfing T."/>
            <person name="Nelson J."/>
            <person name="Stoneking T."/>
            <person name="Pepin K."/>
            <person name="Spieth J."/>
            <person name="Sekhon M."/>
            <person name="Armstrong J."/>
            <person name="Becker M."/>
            <person name="Belter E."/>
            <person name="Cordum H."/>
            <person name="Cordes M."/>
            <person name="Courtney L."/>
            <person name="Courtney W."/>
            <person name="Dante M."/>
            <person name="Du H."/>
            <person name="Edwards J."/>
            <person name="Fryman J."/>
            <person name="Haakensen B."/>
            <person name="Lamar E."/>
            <person name="Latreille P."/>
            <person name="Leonard S."/>
            <person name="Meyer R."/>
            <person name="Mulvaney E."/>
            <person name="Ozersky P."/>
            <person name="Riley A."/>
            <person name="Strowmatt C."/>
            <person name="Wagner-McPherson C."/>
            <person name="Wollam A."/>
            <person name="Yoakum M."/>
            <person name="Bell M."/>
            <person name="Dedhia N."/>
            <person name="Parnell L."/>
            <person name="Shah R."/>
            <person name="Rodriguez M."/>
            <person name="Hoon See L."/>
            <person name="Vil D."/>
            <person name="Baker J."/>
            <person name="Kirchoff K."/>
            <person name="Toth K."/>
            <person name="King L."/>
            <person name="Bahret A."/>
            <person name="Miller B."/>
            <person name="Marra M.A."/>
            <person name="Martienssen R."/>
            <person name="McCombie W.R."/>
            <person name="Wilson R.K."/>
            <person name="Murphy G."/>
            <person name="Bancroft I."/>
            <person name="Volckaert G."/>
            <person name="Wambutt R."/>
            <person name="Duesterhoeft A."/>
            <person name="Stiekema W."/>
            <person name="Pohl T."/>
            <person name="Entian K.-D."/>
            <person name="Terryn N."/>
            <person name="Hartley N."/>
            <person name="Bent E."/>
            <person name="Johnson S."/>
            <person name="Langham S.-A."/>
            <person name="McCullagh B."/>
            <person name="Robben J."/>
            <person name="Grymonprez B."/>
            <person name="Zimmermann W."/>
            <person name="Ramsperger U."/>
            <person name="Wedler H."/>
            <person name="Balke K."/>
            <person name="Wedler E."/>
            <person name="Peters S."/>
            <person name="van Staveren M."/>
            <person name="Dirkse W."/>
            <person name="Mooijman P."/>
            <person name="Klein Lankhorst R."/>
            <person name="Weitzenegger T."/>
            <person name="Bothe G."/>
            <person name="Rose M."/>
            <person name="Hauf J."/>
            <person name="Berneiser S."/>
            <person name="Hempel S."/>
            <person name="Feldpausch M."/>
            <person name="Lamberth S."/>
            <person name="Villarroel R."/>
            <person name="Gielen J."/>
            <person name="Ardiles W."/>
            <person name="Bents O."/>
            <person name="Lemcke K."/>
            <person name="Kolesov G."/>
            <person name="Mayer K.F.X."/>
            <person name="Rudd S."/>
            <person name="Schoof H."/>
            <person name="Schueller C."/>
            <person name="Zaccaria P."/>
            <person name="Mewes H.-W."/>
            <person name="Bevan M."/>
            <person name="Fransz P.F."/>
        </authorList>
    </citation>
    <scope>NUCLEOTIDE SEQUENCE [LARGE SCALE GENOMIC DNA]</scope>
    <source>
        <strain>cv. Columbia</strain>
    </source>
</reference>
<reference key="2">
    <citation type="journal article" date="2017" name="Plant J.">
        <title>Araport11: a complete reannotation of the Arabidopsis thaliana reference genome.</title>
        <authorList>
            <person name="Cheng C.Y."/>
            <person name="Krishnakumar V."/>
            <person name="Chan A.P."/>
            <person name="Thibaud-Nissen F."/>
            <person name="Schobel S."/>
            <person name="Town C.D."/>
        </authorList>
    </citation>
    <scope>GENOME REANNOTATION</scope>
    <source>
        <strain>cv. Columbia</strain>
    </source>
</reference>
<reference key="3">
    <citation type="journal article" date="2003" name="Science">
        <title>Empirical analysis of transcriptional activity in the Arabidopsis genome.</title>
        <authorList>
            <person name="Yamada K."/>
            <person name="Lim J."/>
            <person name="Dale J.M."/>
            <person name="Chen H."/>
            <person name="Shinn P."/>
            <person name="Palm C.J."/>
            <person name="Southwick A.M."/>
            <person name="Wu H.C."/>
            <person name="Kim C.J."/>
            <person name="Nguyen M."/>
            <person name="Pham P.K."/>
            <person name="Cheuk R.F."/>
            <person name="Karlin-Newmann G."/>
            <person name="Liu S.X."/>
            <person name="Lam B."/>
            <person name="Sakano H."/>
            <person name="Wu T."/>
            <person name="Yu G."/>
            <person name="Miranda M."/>
            <person name="Quach H.L."/>
            <person name="Tripp M."/>
            <person name="Chang C.H."/>
            <person name="Lee J.M."/>
            <person name="Toriumi M.J."/>
            <person name="Chan M.M."/>
            <person name="Tang C.C."/>
            <person name="Onodera C.S."/>
            <person name="Deng J.M."/>
            <person name="Akiyama K."/>
            <person name="Ansari Y."/>
            <person name="Arakawa T."/>
            <person name="Banh J."/>
            <person name="Banno F."/>
            <person name="Bowser L."/>
            <person name="Brooks S.Y."/>
            <person name="Carninci P."/>
            <person name="Chao Q."/>
            <person name="Choy N."/>
            <person name="Enju A."/>
            <person name="Goldsmith A.D."/>
            <person name="Gurjal M."/>
            <person name="Hansen N.F."/>
            <person name="Hayashizaki Y."/>
            <person name="Johnson-Hopson C."/>
            <person name="Hsuan V.W."/>
            <person name="Iida K."/>
            <person name="Karnes M."/>
            <person name="Khan S."/>
            <person name="Koesema E."/>
            <person name="Ishida J."/>
            <person name="Jiang P.X."/>
            <person name="Jones T."/>
            <person name="Kawai J."/>
            <person name="Kamiya A."/>
            <person name="Meyers C."/>
            <person name="Nakajima M."/>
            <person name="Narusaka M."/>
            <person name="Seki M."/>
            <person name="Sakurai T."/>
            <person name="Satou M."/>
            <person name="Tamse R."/>
            <person name="Vaysberg M."/>
            <person name="Wallender E.K."/>
            <person name="Wong C."/>
            <person name="Yamamura Y."/>
            <person name="Yuan S."/>
            <person name="Shinozaki K."/>
            <person name="Davis R.W."/>
            <person name="Theologis A."/>
            <person name="Ecker J.R."/>
        </authorList>
    </citation>
    <scope>NUCLEOTIDE SEQUENCE [LARGE SCALE MRNA]</scope>
    <source>
        <strain>cv. Columbia</strain>
    </source>
</reference>
<reference key="4">
    <citation type="submission" date="2002-03" db="EMBL/GenBank/DDBJ databases">
        <title>Full-length cDNA from Arabidopsis thaliana.</title>
        <authorList>
            <person name="Brover V.V."/>
            <person name="Troukhan M.E."/>
            <person name="Alexandrov N.A."/>
            <person name="Lu Y.-P."/>
            <person name="Flavell R.B."/>
            <person name="Feldmann K.A."/>
        </authorList>
    </citation>
    <scope>NUCLEOTIDE SEQUENCE [LARGE SCALE MRNA]</scope>
</reference>
<organism>
    <name type="scientific">Arabidopsis thaliana</name>
    <name type="common">Mouse-ear cress</name>
    <dbReference type="NCBI Taxonomy" id="3702"/>
    <lineage>
        <taxon>Eukaryota</taxon>
        <taxon>Viridiplantae</taxon>
        <taxon>Streptophyta</taxon>
        <taxon>Embryophyta</taxon>
        <taxon>Tracheophyta</taxon>
        <taxon>Spermatophyta</taxon>
        <taxon>Magnoliopsida</taxon>
        <taxon>eudicotyledons</taxon>
        <taxon>Gunneridae</taxon>
        <taxon>Pentapetalae</taxon>
        <taxon>rosids</taxon>
        <taxon>malvids</taxon>
        <taxon>Brassicales</taxon>
        <taxon>Brassicaceae</taxon>
        <taxon>Camelineae</taxon>
        <taxon>Arabidopsis</taxon>
    </lineage>
</organism>
<comment type="catalytic activity">
    <reaction evidence="2">
        <text>a primary alcohol + NAD(+) = an aldehyde + NADH + H(+)</text>
        <dbReference type="Rhea" id="RHEA:10736"/>
        <dbReference type="ChEBI" id="CHEBI:15378"/>
        <dbReference type="ChEBI" id="CHEBI:15734"/>
        <dbReference type="ChEBI" id="CHEBI:17478"/>
        <dbReference type="ChEBI" id="CHEBI:57540"/>
        <dbReference type="ChEBI" id="CHEBI:57945"/>
        <dbReference type="EC" id="1.1.1.1"/>
    </reaction>
</comment>
<comment type="catalytic activity">
    <reaction evidence="2">
        <text>a secondary alcohol + NAD(+) = a ketone + NADH + H(+)</text>
        <dbReference type="Rhea" id="RHEA:10740"/>
        <dbReference type="ChEBI" id="CHEBI:15378"/>
        <dbReference type="ChEBI" id="CHEBI:17087"/>
        <dbReference type="ChEBI" id="CHEBI:35681"/>
        <dbReference type="ChEBI" id="CHEBI:57540"/>
        <dbReference type="ChEBI" id="CHEBI:57945"/>
        <dbReference type="EC" id="1.1.1.1"/>
    </reaction>
</comment>
<comment type="cofactor">
    <cofactor evidence="2">
        <name>Zn(2+)</name>
        <dbReference type="ChEBI" id="CHEBI:29105"/>
    </cofactor>
    <text evidence="2">Binds 2 Zn(2+) ions per subunit.</text>
</comment>
<comment type="subunit">
    <text evidence="2">Homodimer.</text>
</comment>
<comment type="subcellular location">
    <subcellularLocation>
        <location evidence="2">Cytoplasm</location>
    </subcellularLocation>
</comment>
<comment type="alternative products">
    <event type="alternative splicing"/>
    <isoform>
        <id>Q8LEB2-1</id>
        <name>1</name>
        <sequence type="displayed"/>
    </isoform>
    <isoform>
        <id>Q8LEB2-2</id>
        <name>2</name>
        <sequence type="described" ref="VSP_027586"/>
    </isoform>
</comment>
<comment type="miscellaneous">
    <molecule>Isoform 2</molecule>
    <text evidence="3">May be due to intron retention.</text>
</comment>
<comment type="similarity">
    <text evidence="3">Belongs to the zinc-containing alcohol dehydrogenase family. Class-III subfamily.</text>
</comment>
<comment type="sequence caution" evidence="3">
    <conflict type="erroneous gene model prediction">
        <sequence resource="EMBL-CDS" id="CAC08250"/>
    </conflict>
</comment>